<reference key="1">
    <citation type="journal article" date="2011" name="Stand. Genomic Sci.">
        <title>Complete genome sequence of 'Thioalkalivibrio sulfidophilus' HL-EbGr7.</title>
        <authorList>
            <person name="Muyzer G."/>
            <person name="Sorokin D.Y."/>
            <person name="Mavromatis K."/>
            <person name="Lapidus A."/>
            <person name="Clum A."/>
            <person name="Ivanova N."/>
            <person name="Pati A."/>
            <person name="d'Haeseleer P."/>
            <person name="Woyke T."/>
            <person name="Kyrpides N.C."/>
        </authorList>
    </citation>
    <scope>NUCLEOTIDE SEQUENCE [LARGE SCALE GENOMIC DNA]</scope>
    <source>
        <strain>HL-EbGR7</strain>
    </source>
</reference>
<dbReference type="EC" id="3.6.1.66" evidence="1"/>
<dbReference type="EMBL" id="CP001339">
    <property type="protein sequence ID" value="ACL74033.1"/>
    <property type="molecule type" value="Genomic_DNA"/>
</dbReference>
<dbReference type="RefSeq" id="WP_012639496.1">
    <property type="nucleotide sequence ID" value="NC_011901.1"/>
</dbReference>
<dbReference type="SMR" id="B8GPB3"/>
<dbReference type="STRING" id="396588.Tgr7_2961"/>
<dbReference type="KEGG" id="tgr:Tgr7_2961"/>
<dbReference type="eggNOG" id="COG0127">
    <property type="taxonomic scope" value="Bacteria"/>
</dbReference>
<dbReference type="HOGENOM" id="CLU_082080_0_3_6"/>
<dbReference type="OrthoDB" id="9807456at2"/>
<dbReference type="Proteomes" id="UP000002383">
    <property type="component" value="Chromosome"/>
</dbReference>
<dbReference type="GO" id="GO:0005829">
    <property type="term" value="C:cytosol"/>
    <property type="evidence" value="ECO:0007669"/>
    <property type="project" value="TreeGrafter"/>
</dbReference>
<dbReference type="GO" id="GO:0035870">
    <property type="term" value="F:dITP diphosphatase activity"/>
    <property type="evidence" value="ECO:0007669"/>
    <property type="project" value="RHEA"/>
</dbReference>
<dbReference type="GO" id="GO:0036220">
    <property type="term" value="F:ITP diphosphatase activity"/>
    <property type="evidence" value="ECO:0007669"/>
    <property type="project" value="UniProtKB-EC"/>
</dbReference>
<dbReference type="GO" id="GO:0046872">
    <property type="term" value="F:metal ion binding"/>
    <property type="evidence" value="ECO:0007669"/>
    <property type="project" value="UniProtKB-KW"/>
</dbReference>
<dbReference type="GO" id="GO:0000166">
    <property type="term" value="F:nucleotide binding"/>
    <property type="evidence" value="ECO:0007669"/>
    <property type="project" value="UniProtKB-KW"/>
</dbReference>
<dbReference type="GO" id="GO:0017111">
    <property type="term" value="F:ribonucleoside triphosphate phosphatase activity"/>
    <property type="evidence" value="ECO:0007669"/>
    <property type="project" value="InterPro"/>
</dbReference>
<dbReference type="GO" id="GO:0036222">
    <property type="term" value="F:XTP diphosphatase activity"/>
    <property type="evidence" value="ECO:0007669"/>
    <property type="project" value="RHEA"/>
</dbReference>
<dbReference type="GO" id="GO:0009117">
    <property type="term" value="P:nucleotide metabolic process"/>
    <property type="evidence" value="ECO:0007669"/>
    <property type="project" value="UniProtKB-KW"/>
</dbReference>
<dbReference type="GO" id="GO:0009146">
    <property type="term" value="P:purine nucleoside triphosphate catabolic process"/>
    <property type="evidence" value="ECO:0007669"/>
    <property type="project" value="UniProtKB-UniRule"/>
</dbReference>
<dbReference type="CDD" id="cd00515">
    <property type="entry name" value="HAM1"/>
    <property type="match status" value="1"/>
</dbReference>
<dbReference type="FunFam" id="3.90.950.10:FF:000001">
    <property type="entry name" value="dITP/XTP pyrophosphatase"/>
    <property type="match status" value="1"/>
</dbReference>
<dbReference type="Gene3D" id="3.90.950.10">
    <property type="match status" value="1"/>
</dbReference>
<dbReference type="HAMAP" id="MF_01405">
    <property type="entry name" value="Non_canon_purine_NTPase"/>
    <property type="match status" value="1"/>
</dbReference>
<dbReference type="InterPro" id="IPR020922">
    <property type="entry name" value="dITP/XTP_pyrophosphatase"/>
</dbReference>
<dbReference type="InterPro" id="IPR029001">
    <property type="entry name" value="ITPase-like_fam"/>
</dbReference>
<dbReference type="InterPro" id="IPR002637">
    <property type="entry name" value="RdgB/HAM1"/>
</dbReference>
<dbReference type="NCBIfam" id="TIGR00042">
    <property type="entry name" value="RdgB/HAM1 family non-canonical purine NTP pyrophosphatase"/>
    <property type="match status" value="1"/>
</dbReference>
<dbReference type="PANTHER" id="PTHR11067:SF9">
    <property type="entry name" value="INOSINE TRIPHOSPHATE PYROPHOSPHATASE"/>
    <property type="match status" value="1"/>
</dbReference>
<dbReference type="PANTHER" id="PTHR11067">
    <property type="entry name" value="INOSINE TRIPHOSPHATE PYROPHOSPHATASE/HAM1 PROTEIN"/>
    <property type="match status" value="1"/>
</dbReference>
<dbReference type="Pfam" id="PF01725">
    <property type="entry name" value="Ham1p_like"/>
    <property type="match status" value="1"/>
</dbReference>
<dbReference type="SUPFAM" id="SSF52972">
    <property type="entry name" value="ITPase-like"/>
    <property type="match status" value="1"/>
</dbReference>
<proteinExistence type="inferred from homology"/>
<keyword id="KW-0378">Hydrolase</keyword>
<keyword id="KW-0460">Magnesium</keyword>
<keyword id="KW-0479">Metal-binding</keyword>
<keyword id="KW-0546">Nucleotide metabolism</keyword>
<keyword id="KW-0547">Nucleotide-binding</keyword>
<keyword id="KW-1185">Reference proteome</keyword>
<sequence>MKIVLATGNAGKVRELSELLAGTGITILPQSDFGVPEAEENGLSFVENAILKARNAAAHTGLPAIADDSGIEVDALNGSPGIYSARYAGPGGDAEANNRKLLKALEHVESSQRTARFRCVMVYLRHADDPSPVIAEGSWEGRIASEARGPGGHGYDPIFEIPELELTAAEISPAEKNRRSHRGQALRILLERLQGR</sequence>
<feature type="chain" id="PRO_1000184585" description="dITP/XTP pyrophosphatase">
    <location>
        <begin position="1"/>
        <end position="196"/>
    </location>
</feature>
<feature type="active site" description="Proton acceptor" evidence="1">
    <location>
        <position position="68"/>
    </location>
</feature>
<feature type="binding site" evidence="1">
    <location>
        <begin position="7"/>
        <end position="12"/>
    </location>
    <ligand>
        <name>substrate</name>
    </ligand>
</feature>
<feature type="binding site" evidence="1">
    <location>
        <position position="39"/>
    </location>
    <ligand>
        <name>Mg(2+)</name>
        <dbReference type="ChEBI" id="CHEBI:18420"/>
    </ligand>
</feature>
<feature type="binding site" evidence="1">
    <location>
        <position position="68"/>
    </location>
    <ligand>
        <name>Mg(2+)</name>
        <dbReference type="ChEBI" id="CHEBI:18420"/>
    </ligand>
</feature>
<feature type="binding site" evidence="1">
    <location>
        <position position="69"/>
    </location>
    <ligand>
        <name>substrate</name>
    </ligand>
</feature>
<feature type="binding site" evidence="1">
    <location>
        <begin position="153"/>
        <end position="156"/>
    </location>
    <ligand>
        <name>substrate</name>
    </ligand>
</feature>
<feature type="binding site" evidence="1">
    <location>
        <position position="176"/>
    </location>
    <ligand>
        <name>substrate</name>
    </ligand>
</feature>
<feature type="binding site" evidence="1">
    <location>
        <begin position="181"/>
        <end position="182"/>
    </location>
    <ligand>
        <name>substrate</name>
    </ligand>
</feature>
<protein>
    <recommendedName>
        <fullName evidence="1">dITP/XTP pyrophosphatase</fullName>
        <ecNumber evidence="1">3.6.1.66</ecNumber>
    </recommendedName>
    <alternativeName>
        <fullName evidence="1">Non-canonical purine NTP pyrophosphatase</fullName>
    </alternativeName>
    <alternativeName>
        <fullName evidence="1">Non-standard purine NTP pyrophosphatase</fullName>
    </alternativeName>
    <alternativeName>
        <fullName evidence="1">Nucleoside-triphosphate diphosphatase</fullName>
    </alternativeName>
    <alternativeName>
        <fullName evidence="1">Nucleoside-triphosphate pyrophosphatase</fullName>
        <shortName evidence="1">NTPase</shortName>
    </alternativeName>
</protein>
<name>IXTPA_THISH</name>
<organism>
    <name type="scientific">Thioalkalivibrio sulfidiphilus (strain HL-EbGR7)</name>
    <dbReference type="NCBI Taxonomy" id="396588"/>
    <lineage>
        <taxon>Bacteria</taxon>
        <taxon>Pseudomonadati</taxon>
        <taxon>Pseudomonadota</taxon>
        <taxon>Gammaproteobacteria</taxon>
        <taxon>Chromatiales</taxon>
        <taxon>Ectothiorhodospiraceae</taxon>
        <taxon>Thioalkalivibrio</taxon>
    </lineage>
</organism>
<comment type="function">
    <text evidence="1">Pyrophosphatase that catalyzes the hydrolysis of nucleoside triphosphates to their monophosphate derivatives, with a high preference for the non-canonical purine nucleotides XTP (xanthosine triphosphate), dITP (deoxyinosine triphosphate) and ITP. Seems to function as a house-cleaning enzyme that removes non-canonical purine nucleotides from the nucleotide pool, thus preventing their incorporation into DNA/RNA and avoiding chromosomal lesions.</text>
</comment>
<comment type="catalytic activity">
    <reaction evidence="1">
        <text>XTP + H2O = XMP + diphosphate + H(+)</text>
        <dbReference type="Rhea" id="RHEA:28610"/>
        <dbReference type="ChEBI" id="CHEBI:15377"/>
        <dbReference type="ChEBI" id="CHEBI:15378"/>
        <dbReference type="ChEBI" id="CHEBI:33019"/>
        <dbReference type="ChEBI" id="CHEBI:57464"/>
        <dbReference type="ChEBI" id="CHEBI:61314"/>
        <dbReference type="EC" id="3.6.1.66"/>
    </reaction>
</comment>
<comment type="catalytic activity">
    <reaction evidence="1">
        <text>dITP + H2O = dIMP + diphosphate + H(+)</text>
        <dbReference type="Rhea" id="RHEA:28342"/>
        <dbReference type="ChEBI" id="CHEBI:15377"/>
        <dbReference type="ChEBI" id="CHEBI:15378"/>
        <dbReference type="ChEBI" id="CHEBI:33019"/>
        <dbReference type="ChEBI" id="CHEBI:61194"/>
        <dbReference type="ChEBI" id="CHEBI:61382"/>
        <dbReference type="EC" id="3.6.1.66"/>
    </reaction>
</comment>
<comment type="catalytic activity">
    <reaction evidence="1">
        <text>ITP + H2O = IMP + diphosphate + H(+)</text>
        <dbReference type="Rhea" id="RHEA:29399"/>
        <dbReference type="ChEBI" id="CHEBI:15377"/>
        <dbReference type="ChEBI" id="CHEBI:15378"/>
        <dbReference type="ChEBI" id="CHEBI:33019"/>
        <dbReference type="ChEBI" id="CHEBI:58053"/>
        <dbReference type="ChEBI" id="CHEBI:61402"/>
        <dbReference type="EC" id="3.6.1.66"/>
    </reaction>
</comment>
<comment type="cofactor">
    <cofactor evidence="1">
        <name>Mg(2+)</name>
        <dbReference type="ChEBI" id="CHEBI:18420"/>
    </cofactor>
    <text evidence="1">Binds 1 Mg(2+) ion per subunit.</text>
</comment>
<comment type="subunit">
    <text evidence="1">Homodimer.</text>
</comment>
<comment type="similarity">
    <text evidence="1">Belongs to the HAM1 NTPase family.</text>
</comment>
<accession>B8GPB3</accession>
<gene>
    <name type="ordered locus">Tgr7_2961</name>
</gene>
<evidence type="ECO:0000255" key="1">
    <source>
        <dbReference type="HAMAP-Rule" id="MF_01405"/>
    </source>
</evidence>